<accession>P29394</accession>
<gene>
    <name type="primary">rplJ</name>
    <name type="ordered locus">TM_0456</name>
</gene>
<protein>
    <recommendedName>
        <fullName evidence="3">Large ribosomal subunit protein uL10</fullName>
    </recommendedName>
    <alternativeName>
        <fullName>50S ribosomal protein L10</fullName>
    </alternativeName>
</protein>
<reference key="1">
    <citation type="journal article" date="1992" name="J. Biol. Chem.">
        <title>The organization and expression of essential transcription translation component genes in the extremely thermophilic eubacterium Thermotoga maritima.</title>
        <authorList>
            <person name="Liao D."/>
            <person name="Dennis P.P."/>
        </authorList>
    </citation>
    <scope>NUCLEOTIDE SEQUENCE [GENOMIC DNA]</scope>
    <source>
        <strain>ATCC 43589 / DSM 3109 / JCM 10099 / NBRC 100826 / MSB8</strain>
    </source>
</reference>
<reference key="2">
    <citation type="journal article" date="1999" name="Nature">
        <title>Evidence for lateral gene transfer between Archaea and Bacteria from genome sequence of Thermotoga maritima.</title>
        <authorList>
            <person name="Nelson K.E."/>
            <person name="Clayton R.A."/>
            <person name="Gill S.R."/>
            <person name="Gwinn M.L."/>
            <person name="Dodson R.J."/>
            <person name="Haft D.H."/>
            <person name="Hickey E.K."/>
            <person name="Peterson J.D."/>
            <person name="Nelson W.C."/>
            <person name="Ketchum K.A."/>
            <person name="McDonald L.A."/>
            <person name="Utterback T.R."/>
            <person name="Malek J.A."/>
            <person name="Linher K.D."/>
            <person name="Garrett M.M."/>
            <person name="Stewart A.M."/>
            <person name="Cotton M.D."/>
            <person name="Pratt M.S."/>
            <person name="Phillips C.A."/>
            <person name="Richardson D.L."/>
            <person name="Heidelberg J.F."/>
            <person name="Sutton G.G."/>
            <person name="Fleischmann R.D."/>
            <person name="Eisen J.A."/>
            <person name="White O."/>
            <person name="Salzberg S.L."/>
            <person name="Smith H.O."/>
            <person name="Venter J.C."/>
            <person name="Fraser C.M."/>
        </authorList>
    </citation>
    <scope>NUCLEOTIDE SEQUENCE [LARGE SCALE GENOMIC DNA]</scope>
    <source>
        <strain>ATCC 43589 / DSM 3109 / JCM 10099 / NBRC 100826 / MSB8</strain>
    </source>
</reference>
<reference key="3">
    <citation type="journal article" date="1993" name="Nucleic Acids Res.">
        <title>The DNA-dependent RNA-polymerase of Thermotoga maritima; characterisation of the enzyme and the DNA-sequence of the genes for the large subunits.</title>
        <authorList>
            <person name="Palm P."/>
            <person name="Schleper C."/>
            <person name="Arnold-Ammer I."/>
            <person name="Holz I."/>
            <person name="Meier T."/>
            <person name="Lottspeich F."/>
            <person name="Zillig W."/>
        </authorList>
    </citation>
    <scope>NUCLEOTIDE SEQUENCE [GENOMIC DNA] OF 45-179</scope>
</reference>
<reference key="4">
    <citation type="journal article" date="2005" name="Proc. Natl. Acad. Sci. U.S.A.">
        <title>Heptameric (L12)6/L10 rather than canonical pentameric complexes are found by tandem MS of intact ribosomes from thermophilic bacteria.</title>
        <authorList>
            <person name="Ilag L.L."/>
            <person name="Videler H."/>
            <person name="McKay A.R."/>
            <person name="Sobott F."/>
            <person name="Fucini P."/>
            <person name="Nierhaus K.H."/>
            <person name="Robinson C.V."/>
        </authorList>
    </citation>
    <scope>SUBUNIT</scope>
    <scope>STOICHIOMETRY</scope>
    <scope>MASS SPECTROMETRY</scope>
</reference>
<reference key="5">
    <citation type="journal article" date="2005" name="Cell">
        <title>Structural basis for the function of the ribosomal L7/12 stalk in factor binding and GTPase activation.</title>
        <authorList>
            <person name="Diaconu M."/>
            <person name="Kothe U."/>
            <person name="Schlunzen F."/>
            <person name="Fischer N."/>
            <person name="Harms J.M."/>
            <person name="Tonevitsky A.G."/>
            <person name="Stark H."/>
            <person name="Rodnina M.V."/>
            <person name="Wahl M.C."/>
        </authorList>
    </citation>
    <scope>X-RAY CRYSTALLOGRAPHY (1.9 ANGSTROMS)</scope>
    <scope>INTERACTION WITH L7/L12 (RPLL)</scope>
    <scope>SUBUNIT</scope>
</reference>
<evidence type="ECO:0000269" key="1">
    <source>
    </source>
</evidence>
<evidence type="ECO:0000269" key="2">
    <source>
    </source>
</evidence>
<evidence type="ECO:0000305" key="3"/>
<evidence type="ECO:0007829" key="4">
    <source>
        <dbReference type="PDB" id="1ZAV"/>
    </source>
</evidence>
<comment type="function">
    <text evidence="3">Forms part of the ribosomal stalk, playing a central role in the interaction of the ribosome with GTP-bound translation factors (such as IF-2, EF-Tu, EF-G and RF3).</text>
</comment>
<comment type="subunit">
    <text evidence="1 2">Part of the ribosomal stalk of the 50S ribosomal subunit. The N-terminus interacts with L11 and 23S rRNA to form the base of the stalk. The C-terminus forms an elongated spine to which 3 L12 dimers bind in a sequential fashion forming a heptameric L10(L12)2(L12)2(L12)2 complex.</text>
</comment>
<comment type="mass spectrometry"/>
<comment type="similarity">
    <text evidence="3">Belongs to the universal ribosomal protein uL10 family.</text>
</comment>
<sequence>MLTRQQKELIVKEMSEIFKKTSLILFADFLGFTVADLTELRSRLREKYGDGARFRVVKNTLLNLALKNAEYEGYEEFLKGPTAVLYVTEGDPVEAVKIIYNFYKDKKADLSRLKGGFLEGKKFTAEEVENIAKLPSKEELYAMLVGRVKAPITGLVFALSGILRNLVYVLNAIKEKKSE</sequence>
<dbReference type="EMBL" id="Z11839">
    <property type="protein sequence ID" value="CAA77861.1"/>
    <property type="molecule type" value="Genomic_DNA"/>
</dbReference>
<dbReference type="EMBL" id="AE000512">
    <property type="protein sequence ID" value="AAD35539.1"/>
    <property type="molecule type" value="Genomic_DNA"/>
</dbReference>
<dbReference type="EMBL" id="X72695">
    <property type="protein sequence ID" value="CAA51244.1"/>
    <property type="molecule type" value="Genomic_DNA"/>
</dbReference>
<dbReference type="PIR" id="A72376">
    <property type="entry name" value="R5HG10"/>
</dbReference>
<dbReference type="RefSeq" id="NP_228266.1">
    <property type="nucleotide sequence ID" value="NC_000853.1"/>
</dbReference>
<dbReference type="RefSeq" id="WP_004081510.1">
    <property type="nucleotide sequence ID" value="NZ_CP011107.1"/>
</dbReference>
<dbReference type="PDB" id="1ZAV">
    <property type="method" value="X-ray"/>
    <property type="resolution" value="1.90 A"/>
    <property type="chains" value="A=1-179"/>
</dbReference>
<dbReference type="PDB" id="1ZAW">
    <property type="method" value="X-ray"/>
    <property type="resolution" value="2.30 A"/>
    <property type="chains" value="A=1-179"/>
</dbReference>
<dbReference type="PDB" id="1ZAX">
    <property type="method" value="X-ray"/>
    <property type="resolution" value="2.10 A"/>
    <property type="chains" value="A=1-179"/>
</dbReference>
<dbReference type="PDBsum" id="1ZAV"/>
<dbReference type="PDBsum" id="1ZAW"/>
<dbReference type="PDBsum" id="1ZAX"/>
<dbReference type="SMR" id="P29394"/>
<dbReference type="FunCoup" id="P29394">
    <property type="interactions" value="410"/>
</dbReference>
<dbReference type="STRING" id="243274.TM_0456"/>
<dbReference type="PaxDb" id="243274-THEMA_02410"/>
<dbReference type="EnsemblBacteria" id="AAD35539">
    <property type="protein sequence ID" value="AAD35539"/>
    <property type="gene ID" value="TM_0456"/>
</dbReference>
<dbReference type="KEGG" id="tma:TM0456"/>
<dbReference type="KEGG" id="tmi:THEMA_02410"/>
<dbReference type="KEGG" id="tmm:Tmari_0453"/>
<dbReference type="KEGG" id="tmw:THMA_0466"/>
<dbReference type="eggNOG" id="COG0244">
    <property type="taxonomic scope" value="Bacteria"/>
</dbReference>
<dbReference type="InParanoid" id="P29394"/>
<dbReference type="OrthoDB" id="9808307at2"/>
<dbReference type="EvolutionaryTrace" id="P29394"/>
<dbReference type="Proteomes" id="UP000008183">
    <property type="component" value="Chromosome"/>
</dbReference>
<dbReference type="GO" id="GO:0022625">
    <property type="term" value="C:cytosolic large ribosomal subunit"/>
    <property type="evidence" value="ECO:0000318"/>
    <property type="project" value="GO_Central"/>
</dbReference>
<dbReference type="GO" id="GO:0070180">
    <property type="term" value="F:large ribosomal subunit rRNA binding"/>
    <property type="evidence" value="ECO:0007669"/>
    <property type="project" value="UniProtKB-UniRule"/>
</dbReference>
<dbReference type="GO" id="GO:0003735">
    <property type="term" value="F:structural constituent of ribosome"/>
    <property type="evidence" value="ECO:0000318"/>
    <property type="project" value="GO_Central"/>
</dbReference>
<dbReference type="GO" id="GO:0006412">
    <property type="term" value="P:translation"/>
    <property type="evidence" value="ECO:0000318"/>
    <property type="project" value="GO_Central"/>
</dbReference>
<dbReference type="CDD" id="cd05797">
    <property type="entry name" value="Ribosomal_L10"/>
    <property type="match status" value="1"/>
</dbReference>
<dbReference type="Gene3D" id="3.30.70.1730">
    <property type="match status" value="1"/>
</dbReference>
<dbReference type="Gene3D" id="6.10.250.290">
    <property type="match status" value="1"/>
</dbReference>
<dbReference type="HAMAP" id="MF_00362">
    <property type="entry name" value="Ribosomal_uL10"/>
    <property type="match status" value="1"/>
</dbReference>
<dbReference type="InterPro" id="IPR001790">
    <property type="entry name" value="Ribosomal_uL10"/>
</dbReference>
<dbReference type="InterPro" id="IPR043141">
    <property type="entry name" value="Ribosomal_uL10-like_sf"/>
</dbReference>
<dbReference type="InterPro" id="IPR022973">
    <property type="entry name" value="Ribosomal_uL10_bac"/>
</dbReference>
<dbReference type="InterPro" id="IPR047865">
    <property type="entry name" value="Ribosomal_uL10_bac_type"/>
</dbReference>
<dbReference type="InterPro" id="IPR002363">
    <property type="entry name" value="Ribosomal_uL10_CS_bac"/>
</dbReference>
<dbReference type="NCBIfam" id="NF000955">
    <property type="entry name" value="PRK00099.1-1"/>
    <property type="match status" value="1"/>
</dbReference>
<dbReference type="PANTHER" id="PTHR11560">
    <property type="entry name" value="39S RIBOSOMAL PROTEIN L10, MITOCHONDRIAL"/>
    <property type="match status" value="1"/>
</dbReference>
<dbReference type="Pfam" id="PF00466">
    <property type="entry name" value="Ribosomal_L10"/>
    <property type="match status" value="1"/>
</dbReference>
<dbReference type="SUPFAM" id="SSF160369">
    <property type="entry name" value="Ribosomal protein L10-like"/>
    <property type="match status" value="1"/>
</dbReference>
<dbReference type="PROSITE" id="PS01109">
    <property type="entry name" value="RIBOSOMAL_L10"/>
    <property type="match status" value="1"/>
</dbReference>
<keyword id="KW-0002">3D-structure</keyword>
<keyword id="KW-1185">Reference proteome</keyword>
<keyword id="KW-0687">Ribonucleoprotein</keyword>
<keyword id="KW-0689">Ribosomal protein</keyword>
<keyword id="KW-0694">RNA-binding</keyword>
<keyword id="KW-0699">rRNA-binding</keyword>
<feature type="chain" id="PRO_0000154734" description="Large ribosomal subunit protein uL10">
    <location>
        <begin position="1"/>
        <end position="179"/>
    </location>
</feature>
<feature type="region of interest" description="Binds L7/L12 dimers">
    <location>
        <begin position="137"/>
        <end position="179"/>
    </location>
</feature>
<feature type="helix" evidence="4">
    <location>
        <begin position="4"/>
        <end position="18"/>
    </location>
</feature>
<feature type="strand" evidence="4">
    <location>
        <begin position="22"/>
        <end position="27"/>
    </location>
</feature>
<feature type="helix" evidence="4">
    <location>
        <begin position="34"/>
        <end position="48"/>
    </location>
</feature>
<feature type="strand" evidence="4">
    <location>
        <begin position="51"/>
        <end position="57"/>
    </location>
</feature>
<feature type="helix" evidence="4">
    <location>
        <begin position="59"/>
        <end position="68"/>
    </location>
</feature>
<feature type="helix" evidence="4">
    <location>
        <begin position="75"/>
        <end position="77"/>
    </location>
</feature>
<feature type="strand" evidence="4">
    <location>
        <begin position="79"/>
        <end position="90"/>
    </location>
</feature>
<feature type="helix" evidence="4">
    <location>
        <begin position="93"/>
        <end position="105"/>
    </location>
</feature>
<feature type="helix" evidence="4">
    <location>
        <begin position="110"/>
        <end position="112"/>
    </location>
</feature>
<feature type="strand" evidence="4">
    <location>
        <begin position="113"/>
        <end position="118"/>
    </location>
</feature>
<feature type="strand" evidence="4">
    <location>
        <begin position="121"/>
        <end position="124"/>
    </location>
</feature>
<feature type="helix" evidence="4">
    <location>
        <begin position="125"/>
        <end position="132"/>
    </location>
</feature>
<feature type="helix" evidence="4">
    <location>
        <begin position="137"/>
        <end position="175"/>
    </location>
</feature>
<name>RL10_THEMA</name>
<proteinExistence type="evidence at protein level"/>
<organism>
    <name type="scientific">Thermotoga maritima (strain ATCC 43589 / DSM 3109 / JCM 10099 / NBRC 100826 / MSB8)</name>
    <dbReference type="NCBI Taxonomy" id="243274"/>
    <lineage>
        <taxon>Bacteria</taxon>
        <taxon>Thermotogati</taxon>
        <taxon>Thermotogota</taxon>
        <taxon>Thermotogae</taxon>
        <taxon>Thermotogales</taxon>
        <taxon>Thermotogaceae</taxon>
        <taxon>Thermotoga</taxon>
    </lineage>
</organism>